<proteinExistence type="inferred from homology"/>
<keyword id="KW-0004">4Fe-4S</keyword>
<keyword id="KW-0997">Cell inner membrane</keyword>
<keyword id="KW-1003">Cell membrane</keyword>
<keyword id="KW-0249">Electron transport</keyword>
<keyword id="KW-0408">Iron</keyword>
<keyword id="KW-0411">Iron-sulfur</keyword>
<keyword id="KW-0472">Membrane</keyword>
<keyword id="KW-0479">Metal-binding</keyword>
<keyword id="KW-1185">Reference proteome</keyword>
<keyword id="KW-0677">Repeat</keyword>
<keyword id="KW-1278">Translocase</keyword>
<keyword id="KW-0813">Transport</keyword>
<accession>Q89AW8</accession>
<protein>
    <recommendedName>
        <fullName evidence="1">Ion-translocating oxidoreductase complex subunit C</fullName>
        <ecNumber evidence="1">7.-.-.-</ecNumber>
    </recommendedName>
    <alternativeName>
        <fullName evidence="1">Rnf electron transport complex subunit C</fullName>
    </alternativeName>
</protein>
<dbReference type="EC" id="7.-.-.-" evidence="1"/>
<dbReference type="EMBL" id="AE016826">
    <property type="protein sequence ID" value="AAO26844.1"/>
    <property type="molecule type" value="Genomic_DNA"/>
</dbReference>
<dbReference type="SMR" id="Q89AW8"/>
<dbReference type="STRING" id="224915.bbp_110"/>
<dbReference type="KEGG" id="bab:bbp_110"/>
<dbReference type="eggNOG" id="COG4656">
    <property type="taxonomic scope" value="Bacteria"/>
</dbReference>
<dbReference type="HOGENOM" id="CLU_010808_6_2_6"/>
<dbReference type="OrthoDB" id="9767754at2"/>
<dbReference type="Proteomes" id="UP000000601">
    <property type="component" value="Chromosome"/>
</dbReference>
<dbReference type="GO" id="GO:0005886">
    <property type="term" value="C:plasma membrane"/>
    <property type="evidence" value="ECO:0007669"/>
    <property type="project" value="UniProtKB-SubCell"/>
</dbReference>
<dbReference type="GO" id="GO:0051539">
    <property type="term" value="F:4 iron, 4 sulfur cluster binding"/>
    <property type="evidence" value="ECO:0007669"/>
    <property type="project" value="UniProtKB-KW"/>
</dbReference>
<dbReference type="GO" id="GO:0009055">
    <property type="term" value="F:electron transfer activity"/>
    <property type="evidence" value="ECO:0007669"/>
    <property type="project" value="InterPro"/>
</dbReference>
<dbReference type="GO" id="GO:0046872">
    <property type="term" value="F:metal ion binding"/>
    <property type="evidence" value="ECO:0007669"/>
    <property type="project" value="UniProtKB-KW"/>
</dbReference>
<dbReference type="GO" id="GO:0022900">
    <property type="term" value="P:electron transport chain"/>
    <property type="evidence" value="ECO:0007669"/>
    <property type="project" value="UniProtKB-UniRule"/>
</dbReference>
<dbReference type="Gene3D" id="3.30.70.20">
    <property type="match status" value="1"/>
</dbReference>
<dbReference type="Gene3D" id="3.40.50.11540">
    <property type="entry name" value="NADH-ubiquinone oxidoreductase 51kDa subunit"/>
    <property type="match status" value="1"/>
</dbReference>
<dbReference type="HAMAP" id="MF_00461">
    <property type="entry name" value="RsxC_RnfC"/>
    <property type="match status" value="1"/>
</dbReference>
<dbReference type="InterPro" id="IPR017896">
    <property type="entry name" value="4Fe4S_Fe-S-bd"/>
</dbReference>
<dbReference type="InterPro" id="IPR017900">
    <property type="entry name" value="4Fe4S_Fe_S_CS"/>
</dbReference>
<dbReference type="InterPro" id="IPR010208">
    <property type="entry name" value="Ion_transpt_RnfC/RsxC"/>
</dbReference>
<dbReference type="InterPro" id="IPR011538">
    <property type="entry name" value="Nuo51_FMN-bd"/>
</dbReference>
<dbReference type="InterPro" id="IPR037225">
    <property type="entry name" value="Nuo51_FMN-bd_sf"/>
</dbReference>
<dbReference type="InterPro" id="IPR026902">
    <property type="entry name" value="RnfC_N"/>
</dbReference>
<dbReference type="NCBIfam" id="NF003454">
    <property type="entry name" value="PRK05035.1"/>
    <property type="match status" value="1"/>
</dbReference>
<dbReference type="NCBIfam" id="TIGR01945">
    <property type="entry name" value="rnfC"/>
    <property type="match status" value="1"/>
</dbReference>
<dbReference type="PANTHER" id="PTHR43034">
    <property type="entry name" value="ION-TRANSLOCATING OXIDOREDUCTASE COMPLEX SUBUNIT C"/>
    <property type="match status" value="1"/>
</dbReference>
<dbReference type="PANTHER" id="PTHR43034:SF2">
    <property type="entry name" value="ION-TRANSLOCATING OXIDOREDUCTASE COMPLEX SUBUNIT C"/>
    <property type="match status" value="1"/>
</dbReference>
<dbReference type="Pfam" id="PF01512">
    <property type="entry name" value="Complex1_51K"/>
    <property type="match status" value="1"/>
</dbReference>
<dbReference type="Pfam" id="PF12838">
    <property type="entry name" value="Fer4_7"/>
    <property type="match status" value="1"/>
</dbReference>
<dbReference type="Pfam" id="PF13375">
    <property type="entry name" value="RnfC_N"/>
    <property type="match status" value="1"/>
</dbReference>
<dbReference type="SUPFAM" id="SSF46548">
    <property type="entry name" value="alpha-helical ferredoxin"/>
    <property type="match status" value="1"/>
</dbReference>
<dbReference type="SUPFAM" id="SSF142019">
    <property type="entry name" value="Nqo1 FMN-binding domain-like"/>
    <property type="match status" value="1"/>
</dbReference>
<dbReference type="PROSITE" id="PS00198">
    <property type="entry name" value="4FE4S_FER_1"/>
    <property type="match status" value="2"/>
</dbReference>
<dbReference type="PROSITE" id="PS51379">
    <property type="entry name" value="4FE4S_FER_2"/>
    <property type="match status" value="2"/>
</dbReference>
<comment type="function">
    <text evidence="1">Part of a membrane-bound complex that couples electron transfer with translocation of ions across the membrane.</text>
</comment>
<comment type="cofactor">
    <cofactor evidence="1">
        <name>[4Fe-4S] cluster</name>
        <dbReference type="ChEBI" id="CHEBI:49883"/>
    </cofactor>
    <text evidence="1">Binds 2 [4Fe-4S] clusters per subunit.</text>
</comment>
<comment type="subunit">
    <text evidence="1">The complex is composed of six subunits: RnfA, RnfB, RnfC, RnfD, RnfE and RnfG.</text>
</comment>
<comment type="subcellular location">
    <subcellularLocation>
        <location evidence="1">Cell inner membrane</location>
        <topology evidence="1">Peripheral membrane protein</topology>
    </subcellularLocation>
</comment>
<comment type="similarity">
    <text evidence="1">Belongs to the 4Fe4S bacterial-type ferredoxin family. RnfC subfamily.</text>
</comment>
<reference key="1">
    <citation type="journal article" date="2003" name="Proc. Natl. Acad. Sci. U.S.A.">
        <title>Reductive genome evolution in Buchnera aphidicola.</title>
        <authorList>
            <person name="van Ham R.C.H.J."/>
            <person name="Kamerbeek J."/>
            <person name="Palacios C."/>
            <person name="Rausell C."/>
            <person name="Abascal F."/>
            <person name="Bastolla U."/>
            <person name="Fernandez J.M."/>
            <person name="Jimenez L."/>
            <person name="Postigo M."/>
            <person name="Silva F.J."/>
            <person name="Tamames J."/>
            <person name="Viguera E."/>
            <person name="Latorre A."/>
            <person name="Valencia A."/>
            <person name="Moran F."/>
            <person name="Moya A."/>
        </authorList>
    </citation>
    <scope>NUCLEOTIDE SEQUENCE [LARGE SCALE GENOMIC DNA]</scope>
    <source>
        <strain>Bp</strain>
    </source>
</reference>
<name>RNFC_BUCBP</name>
<feature type="chain" id="PRO_0000073204" description="Ion-translocating oxidoreductase complex subunit C">
    <location>
        <begin position="1"/>
        <end position="505"/>
    </location>
</feature>
<feature type="domain" description="4Fe-4S ferredoxin-type 1" evidence="1">
    <location>
        <begin position="381"/>
        <end position="410"/>
    </location>
</feature>
<feature type="domain" description="4Fe-4S ferredoxin-type 2" evidence="1">
    <location>
        <begin position="420"/>
        <end position="449"/>
    </location>
</feature>
<feature type="binding site" evidence="1">
    <location>
        <position position="390"/>
    </location>
    <ligand>
        <name>[4Fe-4S] cluster</name>
        <dbReference type="ChEBI" id="CHEBI:49883"/>
        <label>1</label>
    </ligand>
</feature>
<feature type="binding site" evidence="1">
    <location>
        <position position="393"/>
    </location>
    <ligand>
        <name>[4Fe-4S] cluster</name>
        <dbReference type="ChEBI" id="CHEBI:49883"/>
        <label>1</label>
    </ligand>
</feature>
<feature type="binding site" evidence="1">
    <location>
        <position position="396"/>
    </location>
    <ligand>
        <name>[4Fe-4S] cluster</name>
        <dbReference type="ChEBI" id="CHEBI:49883"/>
        <label>1</label>
    </ligand>
</feature>
<feature type="binding site" evidence="1">
    <location>
        <position position="400"/>
    </location>
    <ligand>
        <name>[4Fe-4S] cluster</name>
        <dbReference type="ChEBI" id="CHEBI:49883"/>
        <label>2</label>
    </ligand>
</feature>
<feature type="binding site" evidence="1">
    <location>
        <position position="429"/>
    </location>
    <ligand>
        <name>[4Fe-4S] cluster</name>
        <dbReference type="ChEBI" id="CHEBI:49883"/>
        <label>2</label>
    </ligand>
</feature>
<feature type="binding site" evidence="1">
    <location>
        <position position="432"/>
    </location>
    <ligand>
        <name>[4Fe-4S] cluster</name>
        <dbReference type="ChEBI" id="CHEBI:49883"/>
        <label>2</label>
    </ligand>
</feature>
<feature type="binding site" evidence="1">
    <location>
        <position position="435"/>
    </location>
    <ligand>
        <name>[4Fe-4S] cluster</name>
        <dbReference type="ChEBI" id="CHEBI:49883"/>
        <label>2</label>
    </ligand>
</feature>
<feature type="binding site" evidence="1">
    <location>
        <position position="439"/>
    </location>
    <ligand>
        <name>[4Fe-4S] cluster</name>
        <dbReference type="ChEBI" id="CHEBI:49883"/>
        <label>1</label>
    </ligand>
</feature>
<evidence type="ECO:0000255" key="1">
    <source>
        <dbReference type="HAMAP-Rule" id="MF_00461"/>
    </source>
</evidence>
<organism>
    <name type="scientific">Buchnera aphidicola subsp. Baizongia pistaciae (strain Bp)</name>
    <dbReference type="NCBI Taxonomy" id="224915"/>
    <lineage>
        <taxon>Bacteria</taxon>
        <taxon>Pseudomonadati</taxon>
        <taxon>Pseudomonadota</taxon>
        <taxon>Gammaproteobacteria</taxon>
        <taxon>Enterobacterales</taxon>
        <taxon>Erwiniaceae</taxon>
        <taxon>Buchnera</taxon>
    </lineage>
</organism>
<sequence>MYKFIKYISIYIKKLFFLNISFFKKVISIFQVDNILFLKKSSQELLKLSRVTLPKKFFVLINSEVLNRGKLCVRKGDLVLRGQTLTLGCGNIVSIHSPTSGRIIDVINNYIFFLDQFFAVVIVESDGRDLWISRTPICNYTQFSSKKLINLIYHSGILGLSGSGFSTSKKLQCAVGKVHTLVVNAVESEPCVTSDDCLIQNFSKEIIDGCKILIWILKIKKILIVVSEEKIIAFNVLKKSVINLKDFELLKVKNKYPSGSSKKLIQILFNKEIPQGKHAIDLGIIMYNVATVFAIKKAILDGEPLTERVITLYGDKFLPSKNVLVRIGTPISHLMKIYKLNEKTLKVNIGGPITGLLIRNFNFSVLKTNNCIMFVSIQNNELNNFEEKNCIRCAACSYSCPMNLLPEQLYWYSKHSNHEKTQIYNIQDCIECGICEQVCPSDIPLMSYYRREKKQISIAKFKNYQIKKFKNLFLLRKQRLNNLNSRKKNTIVSQYIALNKFNFKV</sequence>
<gene>
    <name evidence="1" type="primary">rnfC</name>
    <name type="ordered locus">bbp_110</name>
</gene>